<reference key="1">
    <citation type="journal article" date="2009" name="Genome Res.">
        <title>Newly introduced genomic prophage islands are critical determinants of in vivo competitiveness in the Liverpool epidemic strain of Pseudomonas aeruginosa.</title>
        <authorList>
            <person name="Winstanley C."/>
            <person name="Langille M.G.I."/>
            <person name="Fothergill J.L."/>
            <person name="Kukavica-Ibrulj I."/>
            <person name="Paradis-Bleau C."/>
            <person name="Sanschagrin F."/>
            <person name="Thomson N.R."/>
            <person name="Winsor G.L."/>
            <person name="Quail M.A."/>
            <person name="Lennard N."/>
            <person name="Bignell A."/>
            <person name="Clarke L."/>
            <person name="Seeger K."/>
            <person name="Saunders D."/>
            <person name="Harris D."/>
            <person name="Parkhill J."/>
            <person name="Hancock R.E.W."/>
            <person name="Brinkman F.S.L."/>
            <person name="Levesque R.C."/>
        </authorList>
    </citation>
    <scope>NUCLEOTIDE SEQUENCE [LARGE SCALE GENOMIC DNA]</scope>
    <source>
        <strain>LESB58</strain>
    </source>
</reference>
<gene>
    <name evidence="1" type="primary">rnfB</name>
    <name type="ordered locus">PLES_15251</name>
</gene>
<dbReference type="EC" id="7.-.-.-" evidence="1"/>
<dbReference type="EMBL" id="FM209186">
    <property type="protein sequence ID" value="CAW26253.1"/>
    <property type="molecule type" value="Genomic_DNA"/>
</dbReference>
<dbReference type="SMR" id="B7UWJ3"/>
<dbReference type="KEGG" id="pag:PLES_15251"/>
<dbReference type="HOGENOM" id="CLU_063448_2_0_6"/>
<dbReference type="GO" id="GO:0005886">
    <property type="term" value="C:plasma membrane"/>
    <property type="evidence" value="ECO:0007669"/>
    <property type="project" value="UniProtKB-SubCell"/>
</dbReference>
<dbReference type="GO" id="GO:0051539">
    <property type="term" value="F:4 iron, 4 sulfur cluster binding"/>
    <property type="evidence" value="ECO:0007669"/>
    <property type="project" value="UniProtKB-UniRule"/>
</dbReference>
<dbReference type="GO" id="GO:0009055">
    <property type="term" value="F:electron transfer activity"/>
    <property type="evidence" value="ECO:0007669"/>
    <property type="project" value="InterPro"/>
</dbReference>
<dbReference type="GO" id="GO:0046872">
    <property type="term" value="F:metal ion binding"/>
    <property type="evidence" value="ECO:0007669"/>
    <property type="project" value="UniProtKB-KW"/>
</dbReference>
<dbReference type="GO" id="GO:0022900">
    <property type="term" value="P:electron transport chain"/>
    <property type="evidence" value="ECO:0007669"/>
    <property type="project" value="UniProtKB-UniRule"/>
</dbReference>
<dbReference type="FunFam" id="1.10.15.40:FF:000001">
    <property type="entry name" value="Ion-translocating oxidoreductase complex subunit B"/>
    <property type="match status" value="1"/>
</dbReference>
<dbReference type="Gene3D" id="3.30.70.20">
    <property type="match status" value="1"/>
</dbReference>
<dbReference type="Gene3D" id="1.10.15.40">
    <property type="entry name" value="Electron transport complex subunit B, putative Fe-S cluster"/>
    <property type="match status" value="1"/>
</dbReference>
<dbReference type="HAMAP" id="MF_00463">
    <property type="entry name" value="RsxB_RnfB"/>
    <property type="match status" value="1"/>
</dbReference>
<dbReference type="InterPro" id="IPR007202">
    <property type="entry name" value="4Fe-4S_dom"/>
</dbReference>
<dbReference type="InterPro" id="IPR017896">
    <property type="entry name" value="4Fe4S_Fe-S-bd"/>
</dbReference>
<dbReference type="InterPro" id="IPR017900">
    <property type="entry name" value="4Fe4S_Fe_S_CS"/>
</dbReference>
<dbReference type="InterPro" id="IPR010207">
    <property type="entry name" value="Elect_transpt_cplx_RnfB/RsxB"/>
</dbReference>
<dbReference type="InterPro" id="IPR016463">
    <property type="entry name" value="RnfB/RsxB_Proteobac"/>
</dbReference>
<dbReference type="InterPro" id="IPR050294">
    <property type="entry name" value="RnfB_subfamily"/>
</dbReference>
<dbReference type="NCBIfam" id="NF003475">
    <property type="entry name" value="PRK05113.1"/>
    <property type="match status" value="1"/>
</dbReference>
<dbReference type="NCBIfam" id="TIGR01944">
    <property type="entry name" value="rnfB"/>
    <property type="match status" value="1"/>
</dbReference>
<dbReference type="PANTHER" id="PTHR42859:SF3">
    <property type="entry name" value="ION-TRANSLOCATING OXIDOREDUCTASE COMPLEX SUBUNIT B"/>
    <property type="match status" value="1"/>
</dbReference>
<dbReference type="PANTHER" id="PTHR42859">
    <property type="entry name" value="OXIDOREDUCTASE"/>
    <property type="match status" value="1"/>
</dbReference>
<dbReference type="Pfam" id="PF14697">
    <property type="entry name" value="Fer4_21"/>
    <property type="match status" value="1"/>
</dbReference>
<dbReference type="Pfam" id="PF04060">
    <property type="entry name" value="FeS"/>
    <property type="match status" value="1"/>
</dbReference>
<dbReference type="PIRSF" id="PIRSF005784">
    <property type="entry name" value="Elect_transpt_RnfB"/>
    <property type="match status" value="1"/>
</dbReference>
<dbReference type="SUPFAM" id="SSF54862">
    <property type="entry name" value="4Fe-4S ferredoxins"/>
    <property type="match status" value="1"/>
</dbReference>
<dbReference type="PROSITE" id="PS51656">
    <property type="entry name" value="4FE4S"/>
    <property type="match status" value="1"/>
</dbReference>
<dbReference type="PROSITE" id="PS00198">
    <property type="entry name" value="4FE4S_FER_1"/>
    <property type="match status" value="2"/>
</dbReference>
<dbReference type="PROSITE" id="PS51379">
    <property type="entry name" value="4FE4S_FER_2"/>
    <property type="match status" value="2"/>
</dbReference>
<sequence length="188" mass="20025">MNGVFLAIGALLPICLAGGALLGYAAVRFRVQGDPVAEQVNALLPQTQCGQCGYPGCKPYAEAIAAGDKINKCPPGGEATIRALADLLDLEPEPLDAAEETPPRVAYIREAECIGCTKCIQACPVDAIVGAARLMHTVIADECTGCDLCLEPCPVDCIEMREIPDDVRHWKWPQPSPRLIASDRERAA</sequence>
<protein>
    <recommendedName>
        <fullName evidence="1">Ion-translocating oxidoreductase complex subunit B</fullName>
        <ecNumber evidence="1">7.-.-.-</ecNumber>
    </recommendedName>
    <alternativeName>
        <fullName evidence="1">Rnf electron transport complex subunit B</fullName>
    </alternativeName>
</protein>
<organism>
    <name type="scientific">Pseudomonas aeruginosa (strain LESB58)</name>
    <dbReference type="NCBI Taxonomy" id="557722"/>
    <lineage>
        <taxon>Bacteria</taxon>
        <taxon>Pseudomonadati</taxon>
        <taxon>Pseudomonadota</taxon>
        <taxon>Gammaproteobacteria</taxon>
        <taxon>Pseudomonadales</taxon>
        <taxon>Pseudomonadaceae</taxon>
        <taxon>Pseudomonas</taxon>
    </lineage>
</organism>
<proteinExistence type="inferred from homology"/>
<keyword id="KW-0004">4Fe-4S</keyword>
<keyword id="KW-0997">Cell inner membrane</keyword>
<keyword id="KW-1003">Cell membrane</keyword>
<keyword id="KW-0249">Electron transport</keyword>
<keyword id="KW-0408">Iron</keyword>
<keyword id="KW-0411">Iron-sulfur</keyword>
<keyword id="KW-0472">Membrane</keyword>
<keyword id="KW-0479">Metal-binding</keyword>
<keyword id="KW-0677">Repeat</keyword>
<keyword id="KW-1278">Translocase</keyword>
<keyword id="KW-0813">Transport</keyword>
<evidence type="ECO:0000255" key="1">
    <source>
        <dbReference type="HAMAP-Rule" id="MF_00463"/>
    </source>
</evidence>
<accession>B7UWJ3</accession>
<comment type="function">
    <text evidence="1">Part of a membrane-bound complex that couples electron transfer with translocation of ions across the membrane.</text>
</comment>
<comment type="cofactor">
    <cofactor evidence="1">
        <name>[4Fe-4S] cluster</name>
        <dbReference type="ChEBI" id="CHEBI:49883"/>
    </cofactor>
    <text evidence="1">Binds 3 [4Fe-4S] clusters.</text>
</comment>
<comment type="subunit">
    <text evidence="1">The complex is composed of six subunits: RnfA, RnfB, RnfC, RnfD, RnfE and RnfG.</text>
</comment>
<comment type="subcellular location">
    <subcellularLocation>
        <location evidence="1">Cell inner membrane</location>
    </subcellularLocation>
</comment>
<comment type="similarity">
    <text evidence="1">Belongs to the 4Fe4S bacterial-type ferredoxin family. RnfB subfamily.</text>
</comment>
<name>RNFB_PSEA8</name>
<feature type="chain" id="PRO_1000194488" description="Ion-translocating oxidoreductase complex subunit B">
    <location>
        <begin position="1"/>
        <end position="188"/>
    </location>
</feature>
<feature type="domain" description="4Fe-4S" evidence="1">
    <location>
        <begin position="32"/>
        <end position="90"/>
    </location>
</feature>
<feature type="domain" description="4Fe-4S ferredoxin-type 1" evidence="1">
    <location>
        <begin position="104"/>
        <end position="133"/>
    </location>
</feature>
<feature type="domain" description="4Fe-4S ferredoxin-type 2" evidence="1">
    <location>
        <begin position="134"/>
        <end position="163"/>
    </location>
</feature>
<feature type="region of interest" description="Hydrophobic" evidence="1">
    <location>
        <begin position="1"/>
        <end position="26"/>
    </location>
</feature>
<feature type="binding site" evidence="1">
    <location>
        <position position="49"/>
    </location>
    <ligand>
        <name>[4Fe-4S] cluster</name>
        <dbReference type="ChEBI" id="CHEBI:49883"/>
        <label>1</label>
    </ligand>
</feature>
<feature type="binding site" evidence="1">
    <location>
        <position position="52"/>
    </location>
    <ligand>
        <name>[4Fe-4S] cluster</name>
        <dbReference type="ChEBI" id="CHEBI:49883"/>
        <label>1</label>
    </ligand>
</feature>
<feature type="binding site" evidence="1">
    <location>
        <position position="57"/>
    </location>
    <ligand>
        <name>[4Fe-4S] cluster</name>
        <dbReference type="ChEBI" id="CHEBI:49883"/>
        <label>1</label>
    </ligand>
</feature>
<feature type="binding site" evidence="1">
    <location>
        <position position="73"/>
    </location>
    <ligand>
        <name>[4Fe-4S] cluster</name>
        <dbReference type="ChEBI" id="CHEBI:49883"/>
        <label>1</label>
    </ligand>
</feature>
<feature type="binding site" evidence="1">
    <location>
        <position position="113"/>
    </location>
    <ligand>
        <name>[4Fe-4S] cluster</name>
        <dbReference type="ChEBI" id="CHEBI:49883"/>
        <label>2</label>
    </ligand>
</feature>
<feature type="binding site" evidence="1">
    <location>
        <position position="116"/>
    </location>
    <ligand>
        <name>[4Fe-4S] cluster</name>
        <dbReference type="ChEBI" id="CHEBI:49883"/>
        <label>2</label>
    </ligand>
</feature>
<feature type="binding site" evidence="1">
    <location>
        <position position="119"/>
    </location>
    <ligand>
        <name>[4Fe-4S] cluster</name>
        <dbReference type="ChEBI" id="CHEBI:49883"/>
        <label>2</label>
    </ligand>
</feature>
<feature type="binding site" evidence="1">
    <location>
        <position position="123"/>
    </location>
    <ligand>
        <name>[4Fe-4S] cluster</name>
        <dbReference type="ChEBI" id="CHEBI:49883"/>
        <label>3</label>
    </ligand>
</feature>
<feature type="binding site" evidence="1">
    <location>
        <position position="143"/>
    </location>
    <ligand>
        <name>[4Fe-4S] cluster</name>
        <dbReference type="ChEBI" id="CHEBI:49883"/>
        <label>3</label>
    </ligand>
</feature>
<feature type="binding site" evidence="1">
    <location>
        <position position="146"/>
    </location>
    <ligand>
        <name>[4Fe-4S] cluster</name>
        <dbReference type="ChEBI" id="CHEBI:49883"/>
        <label>3</label>
    </ligand>
</feature>
<feature type="binding site" evidence="1">
    <location>
        <position position="149"/>
    </location>
    <ligand>
        <name>[4Fe-4S] cluster</name>
        <dbReference type="ChEBI" id="CHEBI:49883"/>
        <label>3</label>
    </ligand>
</feature>
<feature type="binding site" evidence="1">
    <location>
        <position position="153"/>
    </location>
    <ligand>
        <name>[4Fe-4S] cluster</name>
        <dbReference type="ChEBI" id="CHEBI:49883"/>
        <label>2</label>
    </ligand>
</feature>